<accession>B0C5Q2</accession>
<keyword id="KW-1185">Reference proteome</keyword>
<keyword id="KW-0694">RNA-binding</keyword>
<keyword id="KW-0804">Transcription</keyword>
<keyword id="KW-0889">Transcription antitermination</keyword>
<keyword id="KW-0805">Transcription regulation</keyword>
<comment type="function">
    <text evidence="1">Involved in transcription antitermination. Required for transcription of ribosomal RNA (rRNA) genes. Binds specifically to the boxA antiterminator sequence of the ribosomal RNA (rrn) operons.</text>
</comment>
<comment type="similarity">
    <text evidence="1">Belongs to the NusB family.</text>
</comment>
<proteinExistence type="inferred from homology"/>
<reference key="1">
    <citation type="journal article" date="2008" name="Proc. Natl. Acad. Sci. U.S.A.">
        <title>Niche adaptation and genome expansion in the chlorophyll d-producing cyanobacterium Acaryochloris marina.</title>
        <authorList>
            <person name="Swingley W.D."/>
            <person name="Chen M."/>
            <person name="Cheung P.C."/>
            <person name="Conrad A.L."/>
            <person name="Dejesa L.C."/>
            <person name="Hao J."/>
            <person name="Honchak B.M."/>
            <person name="Karbach L.E."/>
            <person name="Kurdoglu A."/>
            <person name="Lahiri S."/>
            <person name="Mastrian S.D."/>
            <person name="Miyashita H."/>
            <person name="Page L."/>
            <person name="Ramakrishna P."/>
            <person name="Satoh S."/>
            <person name="Sattley W.M."/>
            <person name="Shimada Y."/>
            <person name="Taylor H.L."/>
            <person name="Tomo T."/>
            <person name="Tsuchiya T."/>
            <person name="Wang Z.T."/>
            <person name="Raymond J."/>
            <person name="Mimuro M."/>
            <person name="Blankenship R.E."/>
            <person name="Touchman J.W."/>
        </authorList>
    </citation>
    <scope>NUCLEOTIDE SEQUENCE [LARGE SCALE GENOMIC DNA]</scope>
    <source>
        <strain>MBIC 11017</strain>
    </source>
</reference>
<gene>
    <name evidence="1" type="primary">nusB</name>
    <name type="ordered locus">AM1_3786</name>
</gene>
<organism>
    <name type="scientific">Acaryochloris marina (strain MBIC 11017)</name>
    <dbReference type="NCBI Taxonomy" id="329726"/>
    <lineage>
        <taxon>Bacteria</taxon>
        <taxon>Bacillati</taxon>
        <taxon>Cyanobacteriota</taxon>
        <taxon>Cyanophyceae</taxon>
        <taxon>Acaryochloridales</taxon>
        <taxon>Acaryochloridaceae</taxon>
        <taxon>Acaryochloris</taxon>
    </lineage>
</organism>
<protein>
    <recommendedName>
        <fullName evidence="1">Transcription antitermination protein NusB</fullName>
    </recommendedName>
    <alternativeName>
        <fullName evidence="1">Antitermination factor NusB</fullName>
    </alternativeName>
</protein>
<sequence>MQPRRIARELALLSIGQLPSNSDRLANQDLQAVMITAVRTLVAEVQEALETASAELKRGSDRILDSELKAIDVQSSRAMVTEAIDLTKTAVNRLGLAIDFPEFIQLANQQSVRDYTLDLIGAVHHHRDEIDQILETSLVDWQLHRLAHIDANLLRLAVAEMKYLDIPNQVAINESVELAKKYSAEEGHRFINGVLRRVTRQIAVP</sequence>
<feature type="chain" id="PRO_1000075175" description="Transcription antitermination protein NusB">
    <location>
        <begin position="1"/>
        <end position="205"/>
    </location>
</feature>
<evidence type="ECO:0000255" key="1">
    <source>
        <dbReference type="HAMAP-Rule" id="MF_00073"/>
    </source>
</evidence>
<name>NUSB_ACAM1</name>
<dbReference type="EMBL" id="CP000828">
    <property type="protein sequence ID" value="ABW28773.1"/>
    <property type="molecule type" value="Genomic_DNA"/>
</dbReference>
<dbReference type="RefSeq" id="WP_012164148.1">
    <property type="nucleotide sequence ID" value="NC_009925.1"/>
</dbReference>
<dbReference type="SMR" id="B0C5Q2"/>
<dbReference type="STRING" id="329726.AM1_3786"/>
<dbReference type="KEGG" id="amr:AM1_3786"/>
<dbReference type="eggNOG" id="COG0781">
    <property type="taxonomic scope" value="Bacteria"/>
</dbReference>
<dbReference type="HOGENOM" id="CLU_087843_0_0_3"/>
<dbReference type="OrthoDB" id="3528057at2"/>
<dbReference type="Proteomes" id="UP000000268">
    <property type="component" value="Chromosome"/>
</dbReference>
<dbReference type="GO" id="GO:0005829">
    <property type="term" value="C:cytosol"/>
    <property type="evidence" value="ECO:0007669"/>
    <property type="project" value="TreeGrafter"/>
</dbReference>
<dbReference type="GO" id="GO:0003723">
    <property type="term" value="F:RNA binding"/>
    <property type="evidence" value="ECO:0007669"/>
    <property type="project" value="UniProtKB-UniRule"/>
</dbReference>
<dbReference type="GO" id="GO:0006353">
    <property type="term" value="P:DNA-templated transcription termination"/>
    <property type="evidence" value="ECO:0007669"/>
    <property type="project" value="UniProtKB-UniRule"/>
</dbReference>
<dbReference type="GO" id="GO:0031564">
    <property type="term" value="P:transcription antitermination"/>
    <property type="evidence" value="ECO:0007669"/>
    <property type="project" value="UniProtKB-KW"/>
</dbReference>
<dbReference type="Gene3D" id="1.10.940.10">
    <property type="entry name" value="NusB-like"/>
    <property type="match status" value="1"/>
</dbReference>
<dbReference type="HAMAP" id="MF_00073">
    <property type="entry name" value="NusB"/>
    <property type="match status" value="1"/>
</dbReference>
<dbReference type="InterPro" id="IPR035926">
    <property type="entry name" value="NusB-like_sf"/>
</dbReference>
<dbReference type="InterPro" id="IPR011605">
    <property type="entry name" value="NusB_fam"/>
</dbReference>
<dbReference type="InterPro" id="IPR006027">
    <property type="entry name" value="NusB_RsmB_TIM44"/>
</dbReference>
<dbReference type="NCBIfam" id="TIGR01951">
    <property type="entry name" value="nusB"/>
    <property type="match status" value="1"/>
</dbReference>
<dbReference type="PANTHER" id="PTHR11078:SF3">
    <property type="entry name" value="ANTITERMINATION NUSB DOMAIN-CONTAINING PROTEIN"/>
    <property type="match status" value="1"/>
</dbReference>
<dbReference type="PANTHER" id="PTHR11078">
    <property type="entry name" value="N UTILIZATION SUBSTANCE PROTEIN B-RELATED"/>
    <property type="match status" value="1"/>
</dbReference>
<dbReference type="Pfam" id="PF01029">
    <property type="entry name" value="NusB"/>
    <property type="match status" value="1"/>
</dbReference>
<dbReference type="SUPFAM" id="SSF48013">
    <property type="entry name" value="NusB-like"/>
    <property type="match status" value="1"/>
</dbReference>